<protein>
    <recommendedName>
        <fullName evidence="1">ATP synthase subunit beta 2</fullName>
        <ecNumber evidence="1">7.1.2.2</ecNumber>
    </recommendedName>
    <alternativeName>
        <fullName evidence="1">ATP synthase F1 sector subunit beta 2</fullName>
    </alternativeName>
    <alternativeName>
        <fullName evidence="1">F-ATPase subunit beta 2</fullName>
    </alternativeName>
</protein>
<name>ATPB2_BURPS</name>
<dbReference type="EC" id="7.1.2.2" evidence="1"/>
<dbReference type="EMBL" id="BX571966">
    <property type="protein sequence ID" value="CAH39431.1"/>
    <property type="status" value="ALT_INIT"/>
    <property type="molecule type" value="Genomic_DNA"/>
</dbReference>
<dbReference type="RefSeq" id="WP_045606127.1">
    <property type="nucleotide sequence ID" value="NC_006351.1"/>
</dbReference>
<dbReference type="RefSeq" id="YP_111959.1">
    <property type="nucleotide sequence ID" value="NC_006351.1"/>
</dbReference>
<dbReference type="SMR" id="Q63IW3"/>
<dbReference type="STRING" id="272560.BPSS1953"/>
<dbReference type="KEGG" id="bps:BPSS1953"/>
<dbReference type="PATRIC" id="fig|272560.51.peg.5443"/>
<dbReference type="eggNOG" id="COG0055">
    <property type="taxonomic scope" value="Bacteria"/>
</dbReference>
<dbReference type="Proteomes" id="UP000000605">
    <property type="component" value="Chromosome 2"/>
</dbReference>
<dbReference type="GO" id="GO:0005886">
    <property type="term" value="C:plasma membrane"/>
    <property type="evidence" value="ECO:0007669"/>
    <property type="project" value="UniProtKB-SubCell"/>
</dbReference>
<dbReference type="GO" id="GO:0045259">
    <property type="term" value="C:proton-transporting ATP synthase complex"/>
    <property type="evidence" value="ECO:0007669"/>
    <property type="project" value="UniProtKB-KW"/>
</dbReference>
<dbReference type="GO" id="GO:0005524">
    <property type="term" value="F:ATP binding"/>
    <property type="evidence" value="ECO:0007669"/>
    <property type="project" value="UniProtKB-UniRule"/>
</dbReference>
<dbReference type="GO" id="GO:0016887">
    <property type="term" value="F:ATP hydrolysis activity"/>
    <property type="evidence" value="ECO:0007669"/>
    <property type="project" value="InterPro"/>
</dbReference>
<dbReference type="GO" id="GO:0046933">
    <property type="term" value="F:proton-transporting ATP synthase activity, rotational mechanism"/>
    <property type="evidence" value="ECO:0007669"/>
    <property type="project" value="UniProtKB-UniRule"/>
</dbReference>
<dbReference type="CDD" id="cd18110">
    <property type="entry name" value="ATP-synt_F1_beta_C"/>
    <property type="match status" value="1"/>
</dbReference>
<dbReference type="CDD" id="cd01133">
    <property type="entry name" value="F1-ATPase_beta_CD"/>
    <property type="match status" value="1"/>
</dbReference>
<dbReference type="Gene3D" id="2.40.10.170">
    <property type="match status" value="1"/>
</dbReference>
<dbReference type="Gene3D" id="1.10.1140.10">
    <property type="entry name" value="Bovine Mitochondrial F1-atpase, Atp Synthase Beta Chain, Chain D, domain 3"/>
    <property type="match status" value="1"/>
</dbReference>
<dbReference type="Gene3D" id="3.40.50.300">
    <property type="entry name" value="P-loop containing nucleotide triphosphate hydrolases"/>
    <property type="match status" value="1"/>
</dbReference>
<dbReference type="HAMAP" id="MF_01347">
    <property type="entry name" value="ATP_synth_beta_bact"/>
    <property type="match status" value="1"/>
</dbReference>
<dbReference type="InterPro" id="IPR003593">
    <property type="entry name" value="AAA+_ATPase"/>
</dbReference>
<dbReference type="InterPro" id="IPR055190">
    <property type="entry name" value="ATP-synt_VA_C"/>
</dbReference>
<dbReference type="InterPro" id="IPR005722">
    <property type="entry name" value="ATP_synth_F1_bsu"/>
</dbReference>
<dbReference type="InterPro" id="IPR020003">
    <property type="entry name" value="ATPase_a/bsu_AS"/>
</dbReference>
<dbReference type="InterPro" id="IPR050053">
    <property type="entry name" value="ATPase_alpha/beta_chains"/>
</dbReference>
<dbReference type="InterPro" id="IPR004100">
    <property type="entry name" value="ATPase_F1/V1/A1_a/bsu_N"/>
</dbReference>
<dbReference type="InterPro" id="IPR036121">
    <property type="entry name" value="ATPase_F1/V1/A1_a/bsu_N_sf"/>
</dbReference>
<dbReference type="InterPro" id="IPR000194">
    <property type="entry name" value="ATPase_F1/V1/A1_a/bsu_nucl-bd"/>
</dbReference>
<dbReference type="InterPro" id="IPR024034">
    <property type="entry name" value="ATPase_F1/V1_b/a_C"/>
</dbReference>
<dbReference type="InterPro" id="IPR027417">
    <property type="entry name" value="P-loop_NTPase"/>
</dbReference>
<dbReference type="NCBIfam" id="TIGR01039">
    <property type="entry name" value="atpD"/>
    <property type="match status" value="1"/>
</dbReference>
<dbReference type="PANTHER" id="PTHR15184">
    <property type="entry name" value="ATP SYNTHASE"/>
    <property type="match status" value="1"/>
</dbReference>
<dbReference type="PANTHER" id="PTHR15184:SF71">
    <property type="entry name" value="ATP SYNTHASE SUBUNIT BETA, MITOCHONDRIAL"/>
    <property type="match status" value="1"/>
</dbReference>
<dbReference type="Pfam" id="PF00006">
    <property type="entry name" value="ATP-synt_ab"/>
    <property type="match status" value="1"/>
</dbReference>
<dbReference type="Pfam" id="PF02874">
    <property type="entry name" value="ATP-synt_ab_N"/>
    <property type="match status" value="1"/>
</dbReference>
<dbReference type="Pfam" id="PF22919">
    <property type="entry name" value="ATP-synt_VA_C"/>
    <property type="match status" value="1"/>
</dbReference>
<dbReference type="SMART" id="SM00382">
    <property type="entry name" value="AAA"/>
    <property type="match status" value="1"/>
</dbReference>
<dbReference type="SUPFAM" id="SSF47917">
    <property type="entry name" value="C-terminal domain of alpha and beta subunits of F1 ATP synthase"/>
    <property type="match status" value="1"/>
</dbReference>
<dbReference type="SUPFAM" id="SSF50615">
    <property type="entry name" value="N-terminal domain of alpha and beta subunits of F1 ATP synthase"/>
    <property type="match status" value="1"/>
</dbReference>
<dbReference type="SUPFAM" id="SSF52540">
    <property type="entry name" value="P-loop containing nucleoside triphosphate hydrolases"/>
    <property type="match status" value="1"/>
</dbReference>
<dbReference type="PROSITE" id="PS00152">
    <property type="entry name" value="ATPASE_ALPHA_BETA"/>
    <property type="match status" value="1"/>
</dbReference>
<feature type="chain" id="PRO_0000339492" description="ATP synthase subunit beta 2">
    <location>
        <begin position="1"/>
        <end position="538"/>
    </location>
</feature>
<feature type="region of interest" description="Disordered" evidence="2">
    <location>
        <begin position="1"/>
        <end position="30"/>
    </location>
</feature>
<feature type="region of interest" description="Disordered" evidence="2">
    <location>
        <begin position="494"/>
        <end position="538"/>
    </location>
</feature>
<feature type="compositionally biased region" description="Polar residues" evidence="2">
    <location>
        <begin position="1"/>
        <end position="10"/>
    </location>
</feature>
<feature type="compositionally biased region" description="Basic and acidic residues" evidence="2">
    <location>
        <begin position="494"/>
        <end position="505"/>
    </location>
</feature>
<feature type="compositionally biased region" description="Low complexity" evidence="2">
    <location>
        <begin position="506"/>
        <end position="529"/>
    </location>
</feature>
<feature type="binding site" evidence="1">
    <location>
        <begin position="185"/>
        <end position="192"/>
    </location>
    <ligand>
        <name>ATP</name>
        <dbReference type="ChEBI" id="CHEBI:30616"/>
    </ligand>
</feature>
<keyword id="KW-0066">ATP synthesis</keyword>
<keyword id="KW-0067">ATP-binding</keyword>
<keyword id="KW-0997">Cell inner membrane</keyword>
<keyword id="KW-1003">Cell membrane</keyword>
<keyword id="KW-0139">CF(1)</keyword>
<keyword id="KW-0375">Hydrogen ion transport</keyword>
<keyword id="KW-0406">Ion transport</keyword>
<keyword id="KW-0472">Membrane</keyword>
<keyword id="KW-0547">Nucleotide-binding</keyword>
<keyword id="KW-1185">Reference proteome</keyword>
<keyword id="KW-1278">Translocase</keyword>
<keyword id="KW-0813">Transport</keyword>
<comment type="function">
    <text evidence="1">Produces ATP from ADP in the presence of a proton gradient across the membrane. The catalytic sites are hosted primarily by the beta subunits.</text>
</comment>
<comment type="catalytic activity">
    <reaction evidence="1">
        <text>ATP + H2O + 4 H(+)(in) = ADP + phosphate + 5 H(+)(out)</text>
        <dbReference type="Rhea" id="RHEA:57720"/>
        <dbReference type="ChEBI" id="CHEBI:15377"/>
        <dbReference type="ChEBI" id="CHEBI:15378"/>
        <dbReference type="ChEBI" id="CHEBI:30616"/>
        <dbReference type="ChEBI" id="CHEBI:43474"/>
        <dbReference type="ChEBI" id="CHEBI:456216"/>
        <dbReference type="EC" id="7.1.2.2"/>
    </reaction>
</comment>
<comment type="subunit">
    <text evidence="1">F-type ATPases have 2 components, CF(1) - the catalytic core - and CF(0) - the membrane proton channel. CF(1) has five subunits: alpha(3), beta(3), gamma(1), delta(1), epsilon(1). CF(0) has three main subunits: a(1), b(2) and c(9-12). The alpha and beta chains form an alternating ring which encloses part of the gamma chain. CF(1) is attached to CF(0) by a central stalk formed by the gamma and epsilon chains, while a peripheral stalk is formed by the delta and b chains.</text>
</comment>
<comment type="subcellular location">
    <subcellularLocation>
        <location evidence="1">Cell inner membrane</location>
        <topology evidence="1">Peripheral membrane protein</topology>
    </subcellularLocation>
</comment>
<comment type="similarity">
    <text evidence="1">Belongs to the ATPase alpha/beta chains family.</text>
</comment>
<comment type="sequence caution" evidence="3">
    <conflict type="erroneous initiation">
        <sequence resource="EMBL-CDS" id="CAH39431"/>
    </conflict>
</comment>
<gene>
    <name evidence="1" type="primary">atpD2</name>
    <name type="ordered locus">BPSS1953</name>
</gene>
<proteinExistence type="inferred from homology"/>
<sequence length="538" mass="55706">MADPQATNGTGAACAERDASDVGDVSDVGDARDEGAGRVVAVRGAVVDVAFDGGALPALNEALTIPVDGASPILAEVHAHLSDAAVRALALGPTGGLRRGAAVRATGGPIRVPVGDAVLGRLLSVTGAPGDDGAALAADVERRPIHRGAPPLAEQKSANALFATGIKVIDLLAPLAQGGKAAMFGGAGVGKTVLVMELIHAMVERYRGISVFAGIGERSREGHEMLLDMRGSGVLGRTVLVYGQMNEPPGARWRVPLTALAIAEYFRDERAQNVLLLMDNVFRFVQAGAEVSGLLGRLPSRVGYQPTLASEVAALQERIASVEGAAVTAIEAVYVPADDFTDPAVTAIAAHVDSMVVLSRAMAAEGMYPAIDPVASSSILLDPLVVGEAHVEVAIEVRRVIEHYRELQDVIALLGIDELGADDRRLVGRARRLQRFLTQPFAVTEAFTGQAGASVEIADTIAGCRAILRGDCDDWRESSLYMVGTLDDARRKEAAAREADARREAAAAASVAGPGTTSGTTSDPASGSAEPQGARHGR</sequence>
<accession>Q63IW3</accession>
<evidence type="ECO:0000255" key="1">
    <source>
        <dbReference type="HAMAP-Rule" id="MF_01347"/>
    </source>
</evidence>
<evidence type="ECO:0000256" key="2">
    <source>
        <dbReference type="SAM" id="MobiDB-lite"/>
    </source>
</evidence>
<evidence type="ECO:0000305" key="3"/>
<organism>
    <name type="scientific">Burkholderia pseudomallei (strain K96243)</name>
    <dbReference type="NCBI Taxonomy" id="272560"/>
    <lineage>
        <taxon>Bacteria</taxon>
        <taxon>Pseudomonadati</taxon>
        <taxon>Pseudomonadota</taxon>
        <taxon>Betaproteobacteria</taxon>
        <taxon>Burkholderiales</taxon>
        <taxon>Burkholderiaceae</taxon>
        <taxon>Burkholderia</taxon>
        <taxon>pseudomallei group</taxon>
    </lineage>
</organism>
<reference key="1">
    <citation type="journal article" date="2004" name="Proc. Natl. Acad. Sci. U.S.A.">
        <title>Genomic plasticity of the causative agent of melioidosis, Burkholderia pseudomallei.</title>
        <authorList>
            <person name="Holden M.T.G."/>
            <person name="Titball R.W."/>
            <person name="Peacock S.J."/>
            <person name="Cerdeno-Tarraga A.-M."/>
            <person name="Atkins T."/>
            <person name="Crossman L.C."/>
            <person name="Pitt T."/>
            <person name="Churcher C."/>
            <person name="Mungall K.L."/>
            <person name="Bentley S.D."/>
            <person name="Sebaihia M."/>
            <person name="Thomson N.R."/>
            <person name="Bason N."/>
            <person name="Beacham I.R."/>
            <person name="Brooks K."/>
            <person name="Brown K.A."/>
            <person name="Brown N.F."/>
            <person name="Challis G.L."/>
            <person name="Cherevach I."/>
            <person name="Chillingworth T."/>
            <person name="Cronin A."/>
            <person name="Crossett B."/>
            <person name="Davis P."/>
            <person name="DeShazer D."/>
            <person name="Feltwell T."/>
            <person name="Fraser A."/>
            <person name="Hance Z."/>
            <person name="Hauser H."/>
            <person name="Holroyd S."/>
            <person name="Jagels K."/>
            <person name="Keith K.E."/>
            <person name="Maddison M."/>
            <person name="Moule S."/>
            <person name="Price C."/>
            <person name="Quail M.A."/>
            <person name="Rabbinowitsch E."/>
            <person name="Rutherford K."/>
            <person name="Sanders M."/>
            <person name="Simmonds M."/>
            <person name="Songsivilai S."/>
            <person name="Stevens K."/>
            <person name="Tumapa S."/>
            <person name="Vesaratchavest M."/>
            <person name="Whitehead S."/>
            <person name="Yeats C."/>
            <person name="Barrell B.G."/>
            <person name="Oyston P.C.F."/>
            <person name="Parkhill J."/>
        </authorList>
    </citation>
    <scope>NUCLEOTIDE SEQUENCE [LARGE SCALE GENOMIC DNA]</scope>
    <source>
        <strain>K96243</strain>
    </source>
</reference>